<feature type="chain" id="PRO_0000163077" description="Molybdopterin synthase catalytic subunit">
    <location>
        <begin position="1"/>
        <end position="156"/>
    </location>
</feature>
<feature type="binding site" evidence="1">
    <location>
        <begin position="36"/>
        <end position="38"/>
    </location>
    <ligand>
        <name>substrate</name>
    </ligand>
</feature>
<feature type="binding site" evidence="1">
    <location>
        <position position="46"/>
    </location>
    <ligand>
        <name>substrate</name>
    </ligand>
</feature>
<feature type="binding site" evidence="1">
    <location>
        <begin position="102"/>
        <end position="103"/>
    </location>
    <ligand>
        <name>substrate</name>
    </ligand>
</feature>
<feature type="binding site" evidence="1">
    <location>
        <position position="118"/>
    </location>
    <ligand>
        <name>substrate</name>
    </ligand>
</feature>
<feature type="binding site" evidence="1">
    <location>
        <begin position="125"/>
        <end position="127"/>
    </location>
    <ligand>
        <name>substrate</name>
    </ligand>
</feature>
<keyword id="KW-0501">Molybdenum cofactor biosynthesis</keyword>
<keyword id="KW-1185">Reference proteome</keyword>
<keyword id="KW-0808">Transferase</keyword>
<dbReference type="EC" id="2.8.1.12"/>
<dbReference type="EMBL" id="BA000004">
    <property type="protein sequence ID" value="BAB06738.1"/>
    <property type="molecule type" value="Genomic_DNA"/>
</dbReference>
<dbReference type="PIR" id="C84027">
    <property type="entry name" value="C84027"/>
</dbReference>
<dbReference type="RefSeq" id="WP_010899163.1">
    <property type="nucleotide sequence ID" value="NC_002570.2"/>
</dbReference>
<dbReference type="SMR" id="Q9K8I7"/>
<dbReference type="STRING" id="272558.gene:10728929"/>
<dbReference type="KEGG" id="bha:BH3019"/>
<dbReference type="eggNOG" id="COG0314">
    <property type="taxonomic scope" value="Bacteria"/>
</dbReference>
<dbReference type="HOGENOM" id="CLU_089568_1_2_9"/>
<dbReference type="OrthoDB" id="9803224at2"/>
<dbReference type="UniPathway" id="UPA00344"/>
<dbReference type="Proteomes" id="UP000001258">
    <property type="component" value="Chromosome"/>
</dbReference>
<dbReference type="GO" id="GO:0030366">
    <property type="term" value="F:molybdopterin synthase activity"/>
    <property type="evidence" value="ECO:0007669"/>
    <property type="project" value="UniProtKB-EC"/>
</dbReference>
<dbReference type="GO" id="GO:0006777">
    <property type="term" value="P:Mo-molybdopterin cofactor biosynthetic process"/>
    <property type="evidence" value="ECO:0007669"/>
    <property type="project" value="UniProtKB-KW"/>
</dbReference>
<dbReference type="CDD" id="cd00756">
    <property type="entry name" value="MoaE"/>
    <property type="match status" value="1"/>
</dbReference>
<dbReference type="FunFam" id="3.90.1170.40:FF:000003">
    <property type="entry name" value="Molybdopterin converting factor subunit 2"/>
    <property type="match status" value="1"/>
</dbReference>
<dbReference type="Gene3D" id="3.90.1170.40">
    <property type="entry name" value="Molybdopterin biosynthesis MoaE subunit"/>
    <property type="match status" value="1"/>
</dbReference>
<dbReference type="InterPro" id="IPR036563">
    <property type="entry name" value="MoaE_sf"/>
</dbReference>
<dbReference type="InterPro" id="IPR003448">
    <property type="entry name" value="Mopterin_biosynth_MoaE"/>
</dbReference>
<dbReference type="PANTHER" id="PTHR23404">
    <property type="entry name" value="MOLYBDOPTERIN SYNTHASE RELATED"/>
    <property type="match status" value="1"/>
</dbReference>
<dbReference type="Pfam" id="PF02391">
    <property type="entry name" value="MoaE"/>
    <property type="match status" value="1"/>
</dbReference>
<dbReference type="SUPFAM" id="SSF54690">
    <property type="entry name" value="Molybdopterin synthase subunit MoaE"/>
    <property type="match status" value="1"/>
</dbReference>
<proteinExistence type="inferred from homology"/>
<gene>
    <name type="primary">moaE</name>
    <name type="ordered locus">BH3019</name>
</gene>
<evidence type="ECO:0000250" key="1"/>
<evidence type="ECO:0000305" key="2"/>
<reference key="1">
    <citation type="journal article" date="2000" name="Nucleic Acids Res.">
        <title>Complete genome sequence of the alkaliphilic bacterium Bacillus halodurans and genomic sequence comparison with Bacillus subtilis.</title>
        <authorList>
            <person name="Takami H."/>
            <person name="Nakasone K."/>
            <person name="Takaki Y."/>
            <person name="Maeno G."/>
            <person name="Sasaki R."/>
            <person name="Masui N."/>
            <person name="Fuji F."/>
            <person name="Hirama C."/>
            <person name="Nakamura Y."/>
            <person name="Ogasawara N."/>
            <person name="Kuhara S."/>
            <person name="Horikoshi K."/>
        </authorList>
    </citation>
    <scope>NUCLEOTIDE SEQUENCE [LARGE SCALE GENOMIC DNA]</scope>
    <source>
        <strain>ATCC BAA-125 / DSM 18197 / FERM 7344 / JCM 9153 / C-125</strain>
    </source>
</reference>
<comment type="function">
    <text evidence="1">Converts molybdopterin precursor Z into molybdopterin. This requires the incorporation of two sulfur atoms into precursor Z to generate a dithiolene group. The sulfur is provided by MoaD (By similarity).</text>
</comment>
<comment type="catalytic activity">
    <reaction>
        <text>2 [molybdopterin-synthase sulfur-carrier protein]-C-terminal-Gly-aminoethanethioate + cyclic pyranopterin phosphate + H2O = molybdopterin + 2 [molybdopterin-synthase sulfur-carrier protein]-C-terminal Gly-Gly + 2 H(+)</text>
        <dbReference type="Rhea" id="RHEA:26333"/>
        <dbReference type="Rhea" id="RHEA-COMP:12202"/>
        <dbReference type="Rhea" id="RHEA-COMP:19907"/>
        <dbReference type="ChEBI" id="CHEBI:15377"/>
        <dbReference type="ChEBI" id="CHEBI:15378"/>
        <dbReference type="ChEBI" id="CHEBI:58698"/>
        <dbReference type="ChEBI" id="CHEBI:59648"/>
        <dbReference type="ChEBI" id="CHEBI:90778"/>
        <dbReference type="ChEBI" id="CHEBI:232372"/>
        <dbReference type="EC" id="2.8.1.12"/>
    </reaction>
</comment>
<comment type="pathway">
    <text>Cofactor biosynthesis; molybdopterin biosynthesis.</text>
</comment>
<comment type="subunit">
    <text evidence="1">Heterotetramer of 2 MoaD subunits and 2 MoaE subunits. Also stable as homodimer. The enzyme changes between these two forms during catalysis (By similarity).</text>
</comment>
<comment type="similarity">
    <text evidence="2">Belongs to the MoaE family.</text>
</comment>
<accession>Q9K8I7</accession>
<sequence length="156" mass="17959">MTSKRFAIMEQPIVIQQVIDQVVHPHAGAINTFIGTVRELTKGKRTLYLQYEAYPSMAEKKLAQIGQEIQERWPEARVAITHRIGRLEITDVAVVIAVSTPHRADSYEASRYAIERIKEIVPIWKKEHWEDGEMWVGDQLETTSYPEGAPKMEEEE</sequence>
<name>MOAE_HALH5</name>
<protein>
    <recommendedName>
        <fullName>Molybdopterin synthase catalytic subunit</fullName>
        <ecNumber>2.8.1.12</ecNumber>
    </recommendedName>
    <alternativeName>
        <fullName>MPT synthase subunit 2</fullName>
    </alternativeName>
    <alternativeName>
        <fullName>Molybdenum cofactor biosynthesis protein E</fullName>
    </alternativeName>
    <alternativeName>
        <fullName>Molybdopterin-converting factor large subunit</fullName>
    </alternativeName>
    <alternativeName>
        <fullName>Molybdopterin-converting factor subunit 2</fullName>
    </alternativeName>
</protein>
<organism>
    <name type="scientific">Halalkalibacterium halodurans (strain ATCC BAA-125 / DSM 18197 / FERM 7344 / JCM 9153 / C-125)</name>
    <name type="common">Bacillus halodurans</name>
    <dbReference type="NCBI Taxonomy" id="272558"/>
    <lineage>
        <taxon>Bacteria</taxon>
        <taxon>Bacillati</taxon>
        <taxon>Bacillota</taxon>
        <taxon>Bacilli</taxon>
        <taxon>Bacillales</taxon>
        <taxon>Bacillaceae</taxon>
        <taxon>Halalkalibacterium (ex Joshi et al. 2022)</taxon>
    </lineage>
</organism>